<protein>
    <recommendedName>
        <fullName evidence="2">Small ribosomal subunit protein uS8c</fullName>
    </recommendedName>
    <alternativeName>
        <fullName>30S ribosomal protein S8, chloroplastic</fullName>
    </alternativeName>
</protein>
<dbReference type="EMBL" id="EF508371">
    <property type="protein sequence ID" value="ABO70777.1"/>
    <property type="molecule type" value="Genomic_DNA"/>
</dbReference>
<dbReference type="RefSeq" id="YP_001293593.1">
    <property type="nucleotide sequence ID" value="NC_009573.1"/>
</dbReference>
<dbReference type="SMR" id="A6MW14"/>
<dbReference type="GeneID" id="5228686"/>
<dbReference type="GO" id="GO:0009507">
    <property type="term" value="C:chloroplast"/>
    <property type="evidence" value="ECO:0007669"/>
    <property type="project" value="UniProtKB-SubCell"/>
</dbReference>
<dbReference type="GO" id="GO:1990904">
    <property type="term" value="C:ribonucleoprotein complex"/>
    <property type="evidence" value="ECO:0007669"/>
    <property type="project" value="UniProtKB-KW"/>
</dbReference>
<dbReference type="GO" id="GO:0005840">
    <property type="term" value="C:ribosome"/>
    <property type="evidence" value="ECO:0007669"/>
    <property type="project" value="UniProtKB-KW"/>
</dbReference>
<dbReference type="GO" id="GO:0019843">
    <property type="term" value="F:rRNA binding"/>
    <property type="evidence" value="ECO:0007669"/>
    <property type="project" value="UniProtKB-UniRule"/>
</dbReference>
<dbReference type="GO" id="GO:0003735">
    <property type="term" value="F:structural constituent of ribosome"/>
    <property type="evidence" value="ECO:0007669"/>
    <property type="project" value="InterPro"/>
</dbReference>
<dbReference type="GO" id="GO:0006412">
    <property type="term" value="P:translation"/>
    <property type="evidence" value="ECO:0007669"/>
    <property type="project" value="UniProtKB-UniRule"/>
</dbReference>
<dbReference type="FunFam" id="3.30.1370.30:FF:000002">
    <property type="entry name" value="30S ribosomal protein S8"/>
    <property type="match status" value="1"/>
</dbReference>
<dbReference type="FunFam" id="3.30.1490.10:FF:000001">
    <property type="entry name" value="30S ribosomal protein S8"/>
    <property type="match status" value="1"/>
</dbReference>
<dbReference type="Gene3D" id="3.30.1370.30">
    <property type="match status" value="1"/>
</dbReference>
<dbReference type="Gene3D" id="3.30.1490.10">
    <property type="match status" value="1"/>
</dbReference>
<dbReference type="HAMAP" id="MF_01302_B">
    <property type="entry name" value="Ribosomal_uS8_B"/>
    <property type="match status" value="1"/>
</dbReference>
<dbReference type="InterPro" id="IPR000630">
    <property type="entry name" value="Ribosomal_uS8"/>
</dbReference>
<dbReference type="InterPro" id="IPR047863">
    <property type="entry name" value="Ribosomal_uS8_CS"/>
</dbReference>
<dbReference type="InterPro" id="IPR035987">
    <property type="entry name" value="Ribosomal_uS8_sf"/>
</dbReference>
<dbReference type="NCBIfam" id="NF001109">
    <property type="entry name" value="PRK00136.1"/>
    <property type="match status" value="1"/>
</dbReference>
<dbReference type="PANTHER" id="PTHR11758">
    <property type="entry name" value="40S RIBOSOMAL PROTEIN S15A"/>
    <property type="match status" value="1"/>
</dbReference>
<dbReference type="Pfam" id="PF00410">
    <property type="entry name" value="Ribosomal_S8"/>
    <property type="match status" value="1"/>
</dbReference>
<dbReference type="SUPFAM" id="SSF56047">
    <property type="entry name" value="Ribosomal protein S8"/>
    <property type="match status" value="1"/>
</dbReference>
<dbReference type="PROSITE" id="PS00053">
    <property type="entry name" value="RIBOSOMAL_S8"/>
    <property type="match status" value="1"/>
</dbReference>
<reference key="1">
    <citation type="journal article" date="2007" name="Mol. Biol. Evol.">
        <title>Plastid genome sequence of the cryptophyte alga Rhodomonas salina CCMP1319: lateral transfer of putative DNA replication machinery and a test of chromist plastid phylogeny.</title>
        <authorList>
            <person name="Khan H."/>
            <person name="Parks N."/>
            <person name="Kozera C."/>
            <person name="Curtis B.A."/>
            <person name="Parsons B.J."/>
            <person name="Bowman S."/>
            <person name="Archibald J.M."/>
        </authorList>
    </citation>
    <scope>NUCLEOTIDE SEQUENCE [LARGE SCALE GENOMIC DNA]</scope>
    <source>
        <strain>CCMP1319 / NEPCC76 / CS-174</strain>
    </source>
</reference>
<gene>
    <name type="primary">rps8</name>
</gene>
<geneLocation type="chloroplast"/>
<keyword id="KW-0150">Chloroplast</keyword>
<keyword id="KW-0934">Plastid</keyword>
<keyword id="KW-0687">Ribonucleoprotein</keyword>
<keyword id="KW-0689">Ribosomal protein</keyword>
<keyword id="KW-0694">RNA-binding</keyword>
<keyword id="KW-0699">rRNA-binding</keyword>
<comment type="function">
    <text evidence="1">One of the primary rRNA binding proteins, it binds directly to 16S rRNA central domain where it helps coordinate assembly of the platform of the 30S subunit.</text>
</comment>
<comment type="subunit">
    <text evidence="1">Part of the 30S ribosomal subunit.</text>
</comment>
<comment type="subcellular location">
    <subcellularLocation>
        <location>Plastid</location>
        <location>Chloroplast</location>
    </subcellularLocation>
</comment>
<comment type="similarity">
    <text evidence="2">Belongs to the universal ribosomal protein uS8 family.</text>
</comment>
<organism>
    <name type="scientific">Rhodomonas salina</name>
    <name type="common">Cryptomonas salina</name>
    <dbReference type="NCBI Taxonomy" id="52970"/>
    <lineage>
        <taxon>Eukaryota</taxon>
        <taxon>Cryptophyceae</taxon>
        <taxon>Pyrenomonadales</taxon>
        <taxon>Pyrenomonadaceae</taxon>
        <taxon>Rhodomonas</taxon>
    </lineage>
</organism>
<feature type="chain" id="PRO_0000305781" description="Small ribosomal subunit protein uS8c">
    <location>
        <begin position="1"/>
        <end position="132"/>
    </location>
</feature>
<sequence length="132" mass="14709">MVNDTIADMLTRVRNANLARHQIVQVPSTKMTKNIADVLLEEGFIQNFEEVGDGINKQLLLSLKYKGKEREPVITALKRISRPGLRVYANRKELPRVLGGLGIAVISTSRGVLTDNKARHQGLGGEVLCYIW</sequence>
<name>RR8_RHDSA</name>
<accession>A6MW14</accession>
<evidence type="ECO:0000250" key="1"/>
<evidence type="ECO:0000305" key="2"/>
<proteinExistence type="inferred from homology"/>